<accession>Q8INZ2</accession>
<keyword id="KW-1003">Cell membrane</keyword>
<keyword id="KW-0472">Membrane</keyword>
<keyword id="KW-0675">Receptor</keyword>
<keyword id="KW-1185">Reference proteome</keyword>
<keyword id="KW-0807">Transducer</keyword>
<keyword id="KW-0812">Transmembrane</keyword>
<keyword id="KW-1133">Transmembrane helix</keyword>
<organism evidence="6">
    <name type="scientific">Drosophila melanogaster</name>
    <name type="common">Fruit fly</name>
    <dbReference type="NCBI Taxonomy" id="7227"/>
    <lineage>
        <taxon>Eukaryota</taxon>
        <taxon>Metazoa</taxon>
        <taxon>Ecdysozoa</taxon>
        <taxon>Arthropoda</taxon>
        <taxon>Hexapoda</taxon>
        <taxon>Insecta</taxon>
        <taxon>Pterygota</taxon>
        <taxon>Neoptera</taxon>
        <taxon>Endopterygota</taxon>
        <taxon>Diptera</taxon>
        <taxon>Brachycera</taxon>
        <taxon>Muscomorpha</taxon>
        <taxon>Ephydroidea</taxon>
        <taxon>Drosophilidae</taxon>
        <taxon>Drosophila</taxon>
        <taxon>Sophophora</taxon>
    </lineage>
</organism>
<sequence>MDLESFLLGAVYYYGLFIGLSNFEFDWNTGRVFTKKWSTLYAIALDSCIFALYIYHWTGNTNIVNAIFGRANMLHEYVVAILTGLRIVTGLFTLILRWYQRCKMMDLASKVVRMYVARPQVRRMSRWGILTKFIFGSITDGLQMAMVLSAMGSVDSQFYLGLGLQYWMFVILNMAMMQQHMIMLFVRTQFQLINTELRQVIDEAKDLLLSPRHQGVFMTKCCSLADQIENIARIQSQLQTIMNQMEEVFGIQGAMTYGGYYLSSVGTCYLAYSILKHGYENLSMTLSTVILAYSWCFFYYLDGMLNLSVMLHVQDDYWEMLQILGKRTIFVGLDVRLEEAFENLNLQLIRNPLKITVVKLYDVTRSNTMAMFGNLITHSIFLIQYDIEHF</sequence>
<comment type="function">
    <text evidence="1">Probable gustatory receptor which mediates acceptance or avoidance behavior, depending on its substrates.</text>
</comment>
<comment type="subcellular location">
    <subcellularLocation>
        <location evidence="1">Cell membrane</location>
        <topology evidence="1">Multi-pass membrane protein</topology>
    </subcellularLocation>
</comment>
<comment type="tissue specificity">
    <text evidence="4">Expressed in neurons of the terminal external chemosensory organ of larvae.</text>
</comment>
<comment type="similarity">
    <text evidence="5">Belongs to the insect chemoreceptor superfamily. Gustatory receptor (GR) family. Gr22e subfamily.</text>
</comment>
<evidence type="ECO:0000250" key="1"/>
<evidence type="ECO:0000255" key="2"/>
<evidence type="ECO:0000269" key="3">
    <source>
    </source>
</evidence>
<evidence type="ECO:0000269" key="4">
    <source>
    </source>
</evidence>
<evidence type="ECO:0000305" key="5"/>
<evidence type="ECO:0000312" key="6">
    <source>
        <dbReference type="EMBL" id="AAN10982.1"/>
    </source>
</evidence>
<gene>
    <name type="primary">Gr36c</name>
    <name type="ORF">CG31748</name>
</gene>
<name>GR36C_DROME</name>
<protein>
    <recommendedName>
        <fullName>Putative gustatory receptor 36c</fullName>
    </recommendedName>
</protein>
<feature type="chain" id="PRO_0000216507" description="Putative gustatory receptor 36c">
    <location>
        <begin position="1"/>
        <end position="390"/>
    </location>
</feature>
<feature type="topological domain" description="Cytoplasmic" evidence="1">
    <location>
        <begin position="1"/>
        <end position="4"/>
    </location>
</feature>
<feature type="transmembrane region" description="Helical; Name=1" evidence="2">
    <location>
        <begin position="5"/>
        <end position="25"/>
    </location>
</feature>
<feature type="topological domain" description="Extracellular" evidence="1">
    <location>
        <begin position="26"/>
        <end position="36"/>
    </location>
</feature>
<feature type="transmembrane region" description="Helical; Name=2" evidence="2">
    <location>
        <begin position="37"/>
        <end position="57"/>
    </location>
</feature>
<feature type="topological domain" description="Cytoplasmic" evidence="1">
    <location>
        <begin position="58"/>
        <end position="75"/>
    </location>
</feature>
<feature type="transmembrane region" description="Helical; Name=3" evidence="2">
    <location>
        <begin position="76"/>
        <end position="96"/>
    </location>
</feature>
<feature type="topological domain" description="Extracellular" evidence="1">
    <location>
        <begin position="97"/>
        <end position="132"/>
    </location>
</feature>
<feature type="transmembrane region" description="Helical; Name=4" evidence="2">
    <location>
        <begin position="133"/>
        <end position="153"/>
    </location>
</feature>
<feature type="topological domain" description="Cytoplasmic" evidence="1">
    <location>
        <begin position="154"/>
        <end position="165"/>
    </location>
</feature>
<feature type="transmembrane region" description="Helical; Name=5" evidence="2">
    <location>
        <begin position="166"/>
        <end position="186"/>
    </location>
</feature>
<feature type="topological domain" description="Extracellular" evidence="1">
    <location>
        <begin position="187"/>
        <end position="254"/>
    </location>
</feature>
<feature type="transmembrane region" description="Helical; Name=6" evidence="2">
    <location>
        <begin position="255"/>
        <end position="275"/>
    </location>
</feature>
<feature type="topological domain" description="Cytoplasmic" evidence="1">
    <location>
        <begin position="276"/>
        <end position="288"/>
    </location>
</feature>
<feature type="transmembrane region" description="Helical; Name=7" evidence="2">
    <location>
        <begin position="289"/>
        <end position="309"/>
    </location>
</feature>
<feature type="topological domain" description="Extracellular" evidence="1">
    <location>
        <begin position="310"/>
        <end position="390"/>
    </location>
</feature>
<reference evidence="5" key="1">
    <citation type="journal article" date="2000" name="Science">
        <title>The genome sequence of Drosophila melanogaster.</title>
        <authorList>
            <person name="Adams M.D."/>
            <person name="Celniker S.E."/>
            <person name="Holt R.A."/>
            <person name="Evans C.A."/>
            <person name="Gocayne J.D."/>
            <person name="Amanatides P.G."/>
            <person name="Scherer S.E."/>
            <person name="Li P.W."/>
            <person name="Hoskins R.A."/>
            <person name="Galle R.F."/>
            <person name="George R.A."/>
            <person name="Lewis S.E."/>
            <person name="Richards S."/>
            <person name="Ashburner M."/>
            <person name="Henderson S.N."/>
            <person name="Sutton G.G."/>
            <person name="Wortman J.R."/>
            <person name="Yandell M.D."/>
            <person name="Zhang Q."/>
            <person name="Chen L.X."/>
            <person name="Brandon R.C."/>
            <person name="Rogers Y.-H.C."/>
            <person name="Blazej R.G."/>
            <person name="Champe M."/>
            <person name="Pfeiffer B.D."/>
            <person name="Wan K.H."/>
            <person name="Doyle C."/>
            <person name="Baxter E.G."/>
            <person name="Helt G."/>
            <person name="Nelson C.R."/>
            <person name="Miklos G.L.G."/>
            <person name="Abril J.F."/>
            <person name="Agbayani A."/>
            <person name="An H.-J."/>
            <person name="Andrews-Pfannkoch C."/>
            <person name="Baldwin D."/>
            <person name="Ballew R.M."/>
            <person name="Basu A."/>
            <person name="Baxendale J."/>
            <person name="Bayraktaroglu L."/>
            <person name="Beasley E.M."/>
            <person name="Beeson K.Y."/>
            <person name="Benos P.V."/>
            <person name="Berman B.P."/>
            <person name="Bhandari D."/>
            <person name="Bolshakov S."/>
            <person name="Borkova D."/>
            <person name="Botchan M.R."/>
            <person name="Bouck J."/>
            <person name="Brokstein P."/>
            <person name="Brottier P."/>
            <person name="Burtis K.C."/>
            <person name="Busam D.A."/>
            <person name="Butler H."/>
            <person name="Cadieu E."/>
            <person name="Center A."/>
            <person name="Chandra I."/>
            <person name="Cherry J.M."/>
            <person name="Cawley S."/>
            <person name="Dahlke C."/>
            <person name="Davenport L.B."/>
            <person name="Davies P."/>
            <person name="de Pablos B."/>
            <person name="Delcher A."/>
            <person name="Deng Z."/>
            <person name="Mays A.D."/>
            <person name="Dew I."/>
            <person name="Dietz S.M."/>
            <person name="Dodson K."/>
            <person name="Doup L.E."/>
            <person name="Downes M."/>
            <person name="Dugan-Rocha S."/>
            <person name="Dunkov B.C."/>
            <person name="Dunn P."/>
            <person name="Durbin K.J."/>
            <person name="Evangelista C.C."/>
            <person name="Ferraz C."/>
            <person name="Ferriera S."/>
            <person name="Fleischmann W."/>
            <person name="Fosler C."/>
            <person name="Gabrielian A.E."/>
            <person name="Garg N.S."/>
            <person name="Gelbart W.M."/>
            <person name="Glasser K."/>
            <person name="Glodek A."/>
            <person name="Gong F."/>
            <person name="Gorrell J.H."/>
            <person name="Gu Z."/>
            <person name="Guan P."/>
            <person name="Harris M."/>
            <person name="Harris N.L."/>
            <person name="Harvey D.A."/>
            <person name="Heiman T.J."/>
            <person name="Hernandez J.R."/>
            <person name="Houck J."/>
            <person name="Hostin D."/>
            <person name="Houston K.A."/>
            <person name="Howland T.J."/>
            <person name="Wei M.-H."/>
            <person name="Ibegwam C."/>
            <person name="Jalali M."/>
            <person name="Kalush F."/>
            <person name="Karpen G.H."/>
            <person name="Ke Z."/>
            <person name="Kennison J.A."/>
            <person name="Ketchum K.A."/>
            <person name="Kimmel B.E."/>
            <person name="Kodira C.D."/>
            <person name="Kraft C.L."/>
            <person name="Kravitz S."/>
            <person name="Kulp D."/>
            <person name="Lai Z."/>
            <person name="Lasko P."/>
            <person name="Lei Y."/>
            <person name="Levitsky A.A."/>
            <person name="Li J.H."/>
            <person name="Li Z."/>
            <person name="Liang Y."/>
            <person name="Lin X."/>
            <person name="Liu X."/>
            <person name="Mattei B."/>
            <person name="McIntosh T.C."/>
            <person name="McLeod M.P."/>
            <person name="McPherson D."/>
            <person name="Merkulov G."/>
            <person name="Milshina N.V."/>
            <person name="Mobarry C."/>
            <person name="Morris J."/>
            <person name="Moshrefi A."/>
            <person name="Mount S.M."/>
            <person name="Moy M."/>
            <person name="Murphy B."/>
            <person name="Murphy L."/>
            <person name="Muzny D.M."/>
            <person name="Nelson D.L."/>
            <person name="Nelson D.R."/>
            <person name="Nelson K.A."/>
            <person name="Nixon K."/>
            <person name="Nusskern D.R."/>
            <person name="Pacleb J.M."/>
            <person name="Palazzolo M."/>
            <person name="Pittman G.S."/>
            <person name="Pan S."/>
            <person name="Pollard J."/>
            <person name="Puri V."/>
            <person name="Reese M.G."/>
            <person name="Reinert K."/>
            <person name="Remington K."/>
            <person name="Saunders R.D.C."/>
            <person name="Scheeler F."/>
            <person name="Shen H."/>
            <person name="Shue B.C."/>
            <person name="Siden-Kiamos I."/>
            <person name="Simpson M."/>
            <person name="Skupski M.P."/>
            <person name="Smith T.J."/>
            <person name="Spier E."/>
            <person name="Spradling A.C."/>
            <person name="Stapleton M."/>
            <person name="Strong R."/>
            <person name="Sun E."/>
            <person name="Svirskas R."/>
            <person name="Tector C."/>
            <person name="Turner R."/>
            <person name="Venter E."/>
            <person name="Wang A.H."/>
            <person name="Wang X."/>
            <person name="Wang Z.-Y."/>
            <person name="Wassarman D.A."/>
            <person name="Weinstock G.M."/>
            <person name="Weissenbach J."/>
            <person name="Williams S.M."/>
            <person name="Woodage T."/>
            <person name="Worley K.C."/>
            <person name="Wu D."/>
            <person name="Yang S."/>
            <person name="Yao Q.A."/>
            <person name="Ye J."/>
            <person name="Yeh R.-F."/>
            <person name="Zaveri J.S."/>
            <person name="Zhan M."/>
            <person name="Zhang G."/>
            <person name="Zhao Q."/>
            <person name="Zheng L."/>
            <person name="Zheng X.H."/>
            <person name="Zhong F.N."/>
            <person name="Zhong W."/>
            <person name="Zhou X."/>
            <person name="Zhu S.C."/>
            <person name="Zhu X."/>
            <person name="Smith H.O."/>
            <person name="Gibbs R.A."/>
            <person name="Myers E.W."/>
            <person name="Rubin G.M."/>
            <person name="Venter J.C."/>
        </authorList>
    </citation>
    <scope>NUCLEOTIDE SEQUENCE [LARGE SCALE GENOMIC DNA]</scope>
    <source>
        <strain evidence="3">Berkeley</strain>
    </source>
</reference>
<reference evidence="5" key="2">
    <citation type="journal article" date="2002" name="Genome Biol.">
        <title>Annotation of the Drosophila melanogaster euchromatic genome: a systematic review.</title>
        <authorList>
            <person name="Misra S."/>
            <person name="Crosby M.A."/>
            <person name="Mungall C.J."/>
            <person name="Matthews B.B."/>
            <person name="Campbell K.S."/>
            <person name="Hradecky P."/>
            <person name="Huang Y."/>
            <person name="Kaminker J.S."/>
            <person name="Millburn G.H."/>
            <person name="Prochnik S.E."/>
            <person name="Smith C.D."/>
            <person name="Tupy J.L."/>
            <person name="Whitfield E.J."/>
            <person name="Bayraktaroglu L."/>
            <person name="Berman B.P."/>
            <person name="Bettencourt B.R."/>
            <person name="Celniker S.E."/>
            <person name="de Grey A.D.N.J."/>
            <person name="Drysdale R.A."/>
            <person name="Harris N.L."/>
            <person name="Richter J."/>
            <person name="Russo S."/>
            <person name="Schroeder A.J."/>
            <person name="Shu S.Q."/>
            <person name="Stapleton M."/>
            <person name="Yamada C."/>
            <person name="Ashburner M."/>
            <person name="Gelbart W.M."/>
            <person name="Rubin G.M."/>
            <person name="Lewis S.E."/>
        </authorList>
    </citation>
    <scope>GENOME REANNOTATION</scope>
    <source>
        <strain>Berkeley</strain>
    </source>
</reference>
<reference evidence="5" key="3">
    <citation type="journal article" date="2001" name="Curr. Biol.">
        <title>Spatially restricted expression of candidate taste receptors in the Drosophila gustatory system.</title>
        <authorList>
            <person name="Dunipace L."/>
            <person name="Meister S."/>
            <person name="McNealy C."/>
            <person name="Amrein H."/>
        </authorList>
    </citation>
    <scope>IDENTIFICATION</scope>
</reference>
<reference key="4">
    <citation type="journal article" date="2011" name="J. Neurosci.">
        <title>Molecular and cellular organization of the taste system in the Drosophila larva.</title>
        <authorList>
            <person name="Kwon J.Y."/>
            <person name="Dahanukar A."/>
            <person name="Weiss L.A."/>
            <person name="Carlson J.R."/>
        </authorList>
    </citation>
    <scope>TISSUE SPECIFICITY</scope>
</reference>
<dbReference type="EMBL" id="AE014134">
    <property type="protein sequence ID" value="AAN10982.1"/>
    <property type="molecule type" value="Genomic_DNA"/>
</dbReference>
<dbReference type="RefSeq" id="NP_724040.1">
    <property type="nucleotide sequence ID" value="NM_165207.1"/>
</dbReference>
<dbReference type="SMR" id="Q8INZ2"/>
<dbReference type="FunCoup" id="Q8INZ2">
    <property type="interactions" value="5"/>
</dbReference>
<dbReference type="STRING" id="7227.FBpp0080517"/>
<dbReference type="PaxDb" id="7227-FBpp0080517"/>
<dbReference type="EnsemblMetazoa" id="FBtr0080964">
    <property type="protein sequence ID" value="FBpp0080517"/>
    <property type="gene ID" value="FBgn0045485"/>
</dbReference>
<dbReference type="GeneID" id="117486"/>
<dbReference type="KEGG" id="dme:Dmel_CG31748"/>
<dbReference type="AGR" id="FB:FBgn0045485"/>
<dbReference type="CTD" id="117486"/>
<dbReference type="FlyBase" id="FBgn0045485">
    <property type="gene designation" value="Gr36c"/>
</dbReference>
<dbReference type="VEuPathDB" id="VectorBase:FBgn0045485"/>
<dbReference type="GeneTree" id="ENSGT00540000073531"/>
<dbReference type="HOGENOM" id="CLU_058694_0_0_1"/>
<dbReference type="InParanoid" id="Q8INZ2"/>
<dbReference type="OMA" id="NMLHEYV"/>
<dbReference type="OrthoDB" id="7856336at2759"/>
<dbReference type="PhylomeDB" id="Q8INZ2"/>
<dbReference type="BioGRID-ORCS" id="117486">
    <property type="hits" value="0 hits in 1 CRISPR screen"/>
</dbReference>
<dbReference type="GenomeRNAi" id="117486"/>
<dbReference type="PRO" id="PR:Q8INZ2"/>
<dbReference type="Proteomes" id="UP000000803">
    <property type="component" value="Chromosome 2L"/>
</dbReference>
<dbReference type="GO" id="GO:0030424">
    <property type="term" value="C:axon"/>
    <property type="evidence" value="ECO:0000318"/>
    <property type="project" value="GO_Central"/>
</dbReference>
<dbReference type="GO" id="GO:0030425">
    <property type="term" value="C:dendrite"/>
    <property type="evidence" value="ECO:0000318"/>
    <property type="project" value="GO_Central"/>
</dbReference>
<dbReference type="GO" id="GO:0016020">
    <property type="term" value="C:membrane"/>
    <property type="evidence" value="ECO:0000303"/>
    <property type="project" value="UniProtKB"/>
</dbReference>
<dbReference type="GO" id="GO:0043025">
    <property type="term" value="C:neuronal cell body"/>
    <property type="evidence" value="ECO:0000318"/>
    <property type="project" value="GO_Central"/>
</dbReference>
<dbReference type="GO" id="GO:0005886">
    <property type="term" value="C:plasma membrane"/>
    <property type="evidence" value="ECO:0000250"/>
    <property type="project" value="FlyBase"/>
</dbReference>
<dbReference type="GO" id="GO:0015276">
    <property type="term" value="F:ligand-gated monoatomic ion channel activity"/>
    <property type="evidence" value="ECO:0000250"/>
    <property type="project" value="FlyBase"/>
</dbReference>
<dbReference type="GO" id="GO:0008527">
    <property type="term" value="F:taste receptor activity"/>
    <property type="evidence" value="ECO:0000303"/>
    <property type="project" value="UniProtKB"/>
</dbReference>
<dbReference type="GO" id="GO:0034220">
    <property type="term" value="P:monoatomic ion transmembrane transport"/>
    <property type="evidence" value="ECO:0000250"/>
    <property type="project" value="FlyBase"/>
</dbReference>
<dbReference type="GO" id="GO:0050909">
    <property type="term" value="P:sensory perception of taste"/>
    <property type="evidence" value="ECO:0000303"/>
    <property type="project" value="UniProtKB"/>
</dbReference>
<dbReference type="GO" id="GO:0007165">
    <property type="term" value="P:signal transduction"/>
    <property type="evidence" value="ECO:0007669"/>
    <property type="project" value="UniProtKB-KW"/>
</dbReference>
<dbReference type="InterPro" id="IPR013604">
    <property type="entry name" value="7TM_chemorcpt"/>
</dbReference>
<dbReference type="Pfam" id="PF08395">
    <property type="entry name" value="7tm_7"/>
    <property type="match status" value="1"/>
</dbReference>
<proteinExistence type="evidence at transcript level"/>